<proteinExistence type="inferred from homology"/>
<name>RL9_DEIGD</name>
<sequence length="146" mass="16054">MQVILLEPGRLGKTGDVVNVKPGYARNWLIPQGIAAPATASNMKTLEAQVRARKKQQEREKAQAEDLASRLNGVAVELSVRAGEGKIYGAVTHADVADALDKLGFDVDRRRIEMPKTVKEIGEYDIAYRAHPEVTIPMKLVVHAQK</sequence>
<comment type="function">
    <text evidence="1">Binds to the 23S rRNA.</text>
</comment>
<comment type="similarity">
    <text evidence="1">Belongs to the bacterial ribosomal protein bL9 family.</text>
</comment>
<evidence type="ECO:0000255" key="1">
    <source>
        <dbReference type="HAMAP-Rule" id="MF_00503"/>
    </source>
</evidence>
<evidence type="ECO:0000305" key="2"/>
<dbReference type="EMBL" id="CP000359">
    <property type="protein sequence ID" value="ABF44466.1"/>
    <property type="molecule type" value="Genomic_DNA"/>
</dbReference>
<dbReference type="RefSeq" id="WP_011529313.1">
    <property type="nucleotide sequence ID" value="NC_008025.1"/>
</dbReference>
<dbReference type="SMR" id="Q1J218"/>
<dbReference type="STRING" id="319795.Dgeo_0163"/>
<dbReference type="KEGG" id="dge:Dgeo_0163"/>
<dbReference type="eggNOG" id="COG0359">
    <property type="taxonomic scope" value="Bacteria"/>
</dbReference>
<dbReference type="HOGENOM" id="CLU_078938_4_1_0"/>
<dbReference type="Proteomes" id="UP000002431">
    <property type="component" value="Chromosome"/>
</dbReference>
<dbReference type="GO" id="GO:1990904">
    <property type="term" value="C:ribonucleoprotein complex"/>
    <property type="evidence" value="ECO:0007669"/>
    <property type="project" value="UniProtKB-KW"/>
</dbReference>
<dbReference type="GO" id="GO:0005840">
    <property type="term" value="C:ribosome"/>
    <property type="evidence" value="ECO:0007669"/>
    <property type="project" value="UniProtKB-KW"/>
</dbReference>
<dbReference type="GO" id="GO:0019843">
    <property type="term" value="F:rRNA binding"/>
    <property type="evidence" value="ECO:0007669"/>
    <property type="project" value="UniProtKB-UniRule"/>
</dbReference>
<dbReference type="GO" id="GO:0003735">
    <property type="term" value="F:structural constituent of ribosome"/>
    <property type="evidence" value="ECO:0007669"/>
    <property type="project" value="InterPro"/>
</dbReference>
<dbReference type="GO" id="GO:0006412">
    <property type="term" value="P:translation"/>
    <property type="evidence" value="ECO:0007669"/>
    <property type="project" value="UniProtKB-UniRule"/>
</dbReference>
<dbReference type="FunFam" id="3.10.430.100:FF:000006">
    <property type="entry name" value="50S ribosomal protein L9"/>
    <property type="match status" value="1"/>
</dbReference>
<dbReference type="Gene3D" id="3.10.430.100">
    <property type="entry name" value="Ribosomal protein L9, C-terminal domain"/>
    <property type="match status" value="1"/>
</dbReference>
<dbReference type="Gene3D" id="3.40.5.10">
    <property type="entry name" value="Ribosomal protein L9, N-terminal domain"/>
    <property type="match status" value="1"/>
</dbReference>
<dbReference type="HAMAP" id="MF_00503">
    <property type="entry name" value="Ribosomal_bL9"/>
    <property type="match status" value="1"/>
</dbReference>
<dbReference type="InterPro" id="IPR000244">
    <property type="entry name" value="Ribosomal_bL9"/>
</dbReference>
<dbReference type="InterPro" id="IPR009027">
    <property type="entry name" value="Ribosomal_bL9/RNase_H1_N"/>
</dbReference>
<dbReference type="InterPro" id="IPR020594">
    <property type="entry name" value="Ribosomal_bL9_bac/chp"/>
</dbReference>
<dbReference type="InterPro" id="IPR020069">
    <property type="entry name" value="Ribosomal_bL9_C"/>
</dbReference>
<dbReference type="InterPro" id="IPR036791">
    <property type="entry name" value="Ribosomal_bL9_C_sf"/>
</dbReference>
<dbReference type="InterPro" id="IPR020070">
    <property type="entry name" value="Ribosomal_bL9_N"/>
</dbReference>
<dbReference type="InterPro" id="IPR036935">
    <property type="entry name" value="Ribosomal_bL9_N_sf"/>
</dbReference>
<dbReference type="NCBIfam" id="TIGR00158">
    <property type="entry name" value="L9"/>
    <property type="match status" value="1"/>
</dbReference>
<dbReference type="PANTHER" id="PTHR21368">
    <property type="entry name" value="50S RIBOSOMAL PROTEIN L9"/>
    <property type="match status" value="1"/>
</dbReference>
<dbReference type="Pfam" id="PF03948">
    <property type="entry name" value="Ribosomal_L9_C"/>
    <property type="match status" value="1"/>
</dbReference>
<dbReference type="Pfam" id="PF01281">
    <property type="entry name" value="Ribosomal_L9_N"/>
    <property type="match status" value="1"/>
</dbReference>
<dbReference type="SUPFAM" id="SSF55658">
    <property type="entry name" value="L9 N-domain-like"/>
    <property type="match status" value="1"/>
</dbReference>
<dbReference type="SUPFAM" id="SSF55653">
    <property type="entry name" value="Ribosomal protein L9 C-domain"/>
    <property type="match status" value="1"/>
</dbReference>
<dbReference type="PROSITE" id="PS00651">
    <property type="entry name" value="RIBOSOMAL_L9"/>
    <property type="match status" value="1"/>
</dbReference>
<organism>
    <name type="scientific">Deinococcus geothermalis (strain DSM 11300 / CIP 105573 / AG-3a)</name>
    <dbReference type="NCBI Taxonomy" id="319795"/>
    <lineage>
        <taxon>Bacteria</taxon>
        <taxon>Thermotogati</taxon>
        <taxon>Deinococcota</taxon>
        <taxon>Deinococci</taxon>
        <taxon>Deinococcales</taxon>
        <taxon>Deinococcaceae</taxon>
        <taxon>Deinococcus</taxon>
    </lineage>
</organism>
<reference key="1">
    <citation type="submission" date="2006-04" db="EMBL/GenBank/DDBJ databases">
        <title>Complete sequence of chromosome of Deinococcus geothermalis DSM 11300.</title>
        <authorList>
            <person name="Copeland A."/>
            <person name="Lucas S."/>
            <person name="Lapidus A."/>
            <person name="Barry K."/>
            <person name="Detter J.C."/>
            <person name="Glavina del Rio T."/>
            <person name="Hammon N."/>
            <person name="Israni S."/>
            <person name="Dalin E."/>
            <person name="Tice H."/>
            <person name="Pitluck S."/>
            <person name="Brettin T."/>
            <person name="Bruce D."/>
            <person name="Han C."/>
            <person name="Tapia R."/>
            <person name="Saunders E."/>
            <person name="Gilna P."/>
            <person name="Schmutz J."/>
            <person name="Larimer F."/>
            <person name="Land M."/>
            <person name="Hauser L."/>
            <person name="Kyrpides N."/>
            <person name="Kim E."/>
            <person name="Daly M.J."/>
            <person name="Fredrickson J.K."/>
            <person name="Makarova K.S."/>
            <person name="Gaidamakova E.K."/>
            <person name="Zhai M."/>
            <person name="Richardson P."/>
        </authorList>
    </citation>
    <scope>NUCLEOTIDE SEQUENCE [LARGE SCALE GENOMIC DNA]</scope>
    <source>
        <strain>DSM 11300 / CIP 105573 / AG-3a</strain>
    </source>
</reference>
<accession>Q1J218</accession>
<gene>
    <name evidence="1" type="primary">rplI</name>
    <name type="ordered locus">Dgeo_0163</name>
</gene>
<protein>
    <recommendedName>
        <fullName evidence="1">Large ribosomal subunit protein bL9</fullName>
    </recommendedName>
    <alternativeName>
        <fullName evidence="2">50S ribosomal protein L9</fullName>
    </alternativeName>
</protein>
<keyword id="KW-0687">Ribonucleoprotein</keyword>
<keyword id="KW-0689">Ribosomal protein</keyword>
<keyword id="KW-0694">RNA-binding</keyword>
<keyword id="KW-0699">rRNA-binding</keyword>
<feature type="chain" id="PRO_0000258452" description="Large ribosomal subunit protein bL9">
    <location>
        <begin position="1"/>
        <end position="146"/>
    </location>
</feature>